<organism>
    <name type="scientific">Pelophylax saharicus</name>
    <name type="common">Sahara frog</name>
    <name type="synonym">Rana saharica</name>
    <dbReference type="NCBI Taxonomy" id="70019"/>
    <lineage>
        <taxon>Eukaryota</taxon>
        <taxon>Metazoa</taxon>
        <taxon>Chordata</taxon>
        <taxon>Craniata</taxon>
        <taxon>Vertebrata</taxon>
        <taxon>Euteleostomi</taxon>
        <taxon>Amphibia</taxon>
        <taxon>Batrachia</taxon>
        <taxon>Anura</taxon>
        <taxon>Neobatrachia</taxon>
        <taxon>Ranoidea</taxon>
        <taxon>Ranidae</taxon>
        <taxon>Pelophylax</taxon>
    </lineage>
</organism>
<proteinExistence type="evidence at protein level"/>
<name>TPC_PELSA</name>
<comment type="function">
    <text evidence="2 3">Amphipathic alpha-helical antimicrobial peptide with potent activity against some Gram-positive bacteria (MIC=4-&gt;80 uM), potent activity against fungi (MIC=10-20 uM), and no activity against Gram-negative bacteria (PubMed:18584916, PubMed:18795798). Does not display anti-leishmania activity (PubMed:18584916). Does not show hemolytic activity (LC(50)&gt;80 uM) (PubMed:18584916, PubMed:18795798).</text>
</comment>
<comment type="subcellular location">
    <subcellularLocation>
        <location evidence="2">Secreted</location>
    </subcellularLocation>
    <subcellularLocation>
        <location evidence="8">Target cell membrane</location>
    </subcellularLocation>
</comment>
<comment type="tissue specificity">
    <text evidence="7">Expressed by the skin glands.</text>
</comment>
<comment type="mass spectrometry" mass="1463.78" method="MALDI" evidence="2"/>
<comment type="similarity">
    <text evidence="6">Belongs to the frog skin active peptide (FSAP) family. Temporin subfamily.</text>
</comment>
<dbReference type="EMBL" id="AM748901">
    <property type="protein sequence ID" value="CAO77284.1"/>
    <property type="molecule type" value="mRNA"/>
</dbReference>
<dbReference type="GO" id="GO:0005576">
    <property type="term" value="C:extracellular region"/>
    <property type="evidence" value="ECO:0007669"/>
    <property type="project" value="UniProtKB-SubCell"/>
</dbReference>
<dbReference type="GO" id="GO:0016020">
    <property type="term" value="C:membrane"/>
    <property type="evidence" value="ECO:0007669"/>
    <property type="project" value="UniProtKB-KW"/>
</dbReference>
<dbReference type="GO" id="GO:0044218">
    <property type="term" value="C:other organism cell membrane"/>
    <property type="evidence" value="ECO:0007669"/>
    <property type="project" value="UniProtKB-KW"/>
</dbReference>
<dbReference type="GO" id="GO:0042742">
    <property type="term" value="P:defense response to bacterium"/>
    <property type="evidence" value="ECO:0007669"/>
    <property type="project" value="UniProtKB-KW"/>
</dbReference>
<dbReference type="GO" id="GO:0050832">
    <property type="term" value="P:defense response to fungus"/>
    <property type="evidence" value="ECO:0007669"/>
    <property type="project" value="UniProtKB-KW"/>
</dbReference>
<dbReference type="GO" id="GO:0045087">
    <property type="term" value="P:innate immune response"/>
    <property type="evidence" value="ECO:0007669"/>
    <property type="project" value="UniProtKB-KW"/>
</dbReference>
<dbReference type="GO" id="GO:0031640">
    <property type="term" value="P:killing of cells of another organism"/>
    <property type="evidence" value="ECO:0007669"/>
    <property type="project" value="UniProtKB-KW"/>
</dbReference>
<dbReference type="InterPro" id="IPR004275">
    <property type="entry name" value="Frog_antimicrobial_propeptide"/>
</dbReference>
<dbReference type="Pfam" id="PF03032">
    <property type="entry name" value="FSAP_sig_propep"/>
    <property type="match status" value="1"/>
</dbReference>
<accession>B3KYH6</accession>
<feature type="signal peptide" evidence="1">
    <location>
        <begin position="1" status="less than"/>
        <end position="10"/>
    </location>
</feature>
<feature type="propeptide" id="PRO_0000450299" evidence="7">
    <location>
        <begin position="11"/>
        <end position="35"/>
    </location>
</feature>
<feature type="peptide" id="PRO_0000450300" description="Temporin-SHc" evidence="2">
    <location>
        <begin position="36"/>
        <end position="48"/>
    </location>
</feature>
<feature type="modified residue" description="Phenylalanine amide" evidence="2">
    <location>
        <position position="48"/>
    </location>
</feature>
<feature type="non-terminal residue" evidence="9">
    <location>
        <position position="1"/>
    </location>
</feature>
<evidence type="ECO:0000250" key="1">
    <source>
        <dbReference type="UniProtKB" id="P79874"/>
    </source>
</evidence>
<evidence type="ECO:0000269" key="2">
    <source>
    </source>
</evidence>
<evidence type="ECO:0000269" key="3">
    <source>
    </source>
</evidence>
<evidence type="ECO:0000303" key="4">
    <source>
    </source>
</evidence>
<evidence type="ECO:0000303" key="5">
    <source>
    </source>
</evidence>
<evidence type="ECO:0000305" key="6"/>
<evidence type="ECO:0000305" key="7">
    <source>
    </source>
</evidence>
<evidence type="ECO:0000305" key="8">
    <source>
    </source>
</evidence>
<evidence type="ECO:0000312" key="9">
    <source>
        <dbReference type="EMBL" id="CAO77284.1"/>
    </source>
</evidence>
<sequence length="50" mass="5712">FLGTINLSLCEQERDADEEERRDEPDGSNVEVEKRFLSHIAGFLSNLFGK</sequence>
<keyword id="KW-0027">Amidation</keyword>
<keyword id="KW-0878">Amphibian defense peptide</keyword>
<keyword id="KW-0044">Antibiotic</keyword>
<keyword id="KW-0929">Antimicrobial</keyword>
<keyword id="KW-0165">Cleavage on pair of basic residues</keyword>
<keyword id="KW-0903">Direct protein sequencing</keyword>
<keyword id="KW-0295">Fungicide</keyword>
<keyword id="KW-0391">Immunity</keyword>
<keyword id="KW-0399">Innate immunity</keyword>
<keyword id="KW-0472">Membrane</keyword>
<keyword id="KW-0964">Secreted</keyword>
<keyword id="KW-0732">Signal</keyword>
<keyword id="KW-1052">Target cell membrane</keyword>
<keyword id="KW-1053">Target membrane</keyword>
<reference key="1">
    <citation type="journal article" date="2008" name="Peptides">
        <title>Isolation, characterization and molecular cloning of new temporins from the skin of the North African ranid Pelophylax saharica.</title>
        <authorList>
            <person name="Abbassi F."/>
            <person name="Oury B."/>
            <person name="Blasco T."/>
            <person name="Sereno D."/>
            <person name="Bolbach G."/>
            <person name="Nicolas P."/>
            <person name="Hani K."/>
            <person name="Amiche M."/>
            <person name="Ladram A."/>
        </authorList>
    </citation>
    <scope>NUCLEOTIDE SEQUENCE [MRNA]</scope>
    <scope>PROTEIN SEQUENCE OF 36-48</scope>
    <scope>FUNCTION</scope>
    <scope>MASS SPECTROMETRY</scope>
    <scope>SUBCELLULAR LOCATION</scope>
    <scope>AMIDATION AT PHE-48</scope>
    <scope>SYNTHESISI OF 36-48</scope>
    <source>
        <tissue>Skin</tissue>
    </source>
</reference>
<reference key="2">
    <citation type="journal article" date="2008" name="Biochemistry">
        <title>Solution structure and model membrane interactions of temporins-SH, antimicrobial peptides from amphibian skin. A NMR spectroscopy and differential scanning calorimetry study.</title>
        <authorList>
            <person name="Abbassi F."/>
            <person name="Galanth C."/>
            <person name="Amiche M."/>
            <person name="Saito K."/>
            <person name="Piesse C."/>
            <person name="Zargarian L."/>
            <person name="Hani K."/>
            <person name="Nicolas P."/>
            <person name="Lequin O."/>
            <person name="Ladram A."/>
        </authorList>
    </citation>
    <scope>STRUCTURE BY NMR OF 36-48 IN SDS MICELLES</scope>
    <scope>FUNCTION</scope>
    <scope>SYNTHESIS OF 36-48</scope>
</reference>
<protein>
    <recommendedName>
        <fullName evidence="5">Temporin-SHc</fullName>
    </recommendedName>
    <alternativeName>
        <fullName evidence="4">Temporin-1Sc</fullName>
        <shortName evidence="4">Temp-1Sc</shortName>
    </alternativeName>
</protein>